<sequence>RPPGFSPFR</sequence>
<name>BRK1_PHAJA</name>
<comment type="function">
    <text evidence="1">Produces in vitro relaxation of rat arterial smooth muscle and constriction of intestinal smooth muscle (By similarity). May target bradykinin receptors (BDKRB).</text>
</comment>
<comment type="subcellular location">
    <subcellularLocation>
        <location evidence="2">Secreted</location>
    </subcellularLocation>
</comment>
<comment type="tissue specificity">
    <text evidence="2">Expressed by the skin glands.</text>
</comment>
<comment type="mass spectrometry"/>
<comment type="similarity">
    <text evidence="4">Belongs to the bradykinin-related peptide family.</text>
</comment>
<proteinExistence type="evidence at protein level"/>
<organism>
    <name type="scientific">Phasmahyla jandaia</name>
    <name type="common">Jandaia leaf frog</name>
    <name type="synonym">Phyllomedusa jandaia</name>
    <dbReference type="NCBI Taxonomy" id="762504"/>
    <lineage>
        <taxon>Eukaryota</taxon>
        <taxon>Metazoa</taxon>
        <taxon>Chordata</taxon>
        <taxon>Craniata</taxon>
        <taxon>Vertebrata</taxon>
        <taxon>Euteleostomi</taxon>
        <taxon>Amphibia</taxon>
        <taxon>Batrachia</taxon>
        <taxon>Anura</taxon>
        <taxon>Neobatrachia</taxon>
        <taxon>Hyloidea</taxon>
        <taxon>Hylidae</taxon>
        <taxon>Phyllomedusinae</taxon>
        <taxon>Phasmahyla</taxon>
    </lineage>
</organism>
<reference evidence="4" key="1">
    <citation type="journal article" date="2011" name="Toxicon">
        <title>Peptidomic dissection of the skin secretion of Phasmahyla jandaia (Bokermann and Sazima, 1978) (Anura, Hylidae, Phyllomedusinae).</title>
        <authorList>
            <person name="Rates B."/>
            <person name="Silva L.P."/>
            <person name="Ireno I.C."/>
            <person name="Leite F.S."/>
            <person name="Borges M.H."/>
            <person name="Bloch C. Jr."/>
            <person name="De Lima M.E."/>
            <person name="Pimenta A.M."/>
        </authorList>
    </citation>
    <scope>PROTEIN SEQUENCE</scope>
    <scope>SUBCELLULAR LOCATION</scope>
    <scope>TISSUE SPECIFICITY</scope>
    <scope>MASS SPECTROMETRY</scope>
    <source>
        <tissue evidence="2">Skin secretion</tissue>
    </source>
</reference>
<dbReference type="GO" id="GO:0005576">
    <property type="term" value="C:extracellular region"/>
    <property type="evidence" value="ECO:0007669"/>
    <property type="project" value="UniProtKB-SubCell"/>
</dbReference>
<dbReference type="GO" id="GO:0090729">
    <property type="term" value="F:toxin activity"/>
    <property type="evidence" value="ECO:0007669"/>
    <property type="project" value="UniProtKB-KW"/>
</dbReference>
<dbReference type="GO" id="GO:0006952">
    <property type="term" value="P:defense response"/>
    <property type="evidence" value="ECO:0007669"/>
    <property type="project" value="UniProtKB-KW"/>
</dbReference>
<dbReference type="GO" id="GO:0042311">
    <property type="term" value="P:vasodilation"/>
    <property type="evidence" value="ECO:0007669"/>
    <property type="project" value="UniProtKB-KW"/>
</dbReference>
<protein>
    <recommendedName>
        <fullName evidence="3">Bradykinin</fullName>
    </recommendedName>
</protein>
<evidence type="ECO:0000250" key="1"/>
<evidence type="ECO:0000269" key="2">
    <source>
    </source>
</evidence>
<evidence type="ECO:0000303" key="3">
    <source>
    </source>
</evidence>
<evidence type="ECO:0000305" key="4"/>
<feature type="peptide" id="PRO_0000404630" description="Bradykinin" evidence="2">
    <location>
        <begin position="1"/>
        <end position="9"/>
    </location>
</feature>
<accession>P86627</accession>
<keyword id="KW-0878">Amphibian defense peptide</keyword>
<keyword id="KW-0903">Direct protein sequencing</keyword>
<keyword id="KW-1213">G-protein coupled receptor impairing toxin</keyword>
<keyword id="KW-0964">Secreted</keyword>
<keyword id="KW-0800">Toxin</keyword>
<keyword id="KW-0838">Vasoactive</keyword>
<keyword id="KW-0840">Vasodilator</keyword>